<accession>Q8NBJ7</accession>
<accession>B4DU41</accession>
<accession>B4DWQ0</accession>
<accession>Q14DW5</accession>
<accession>Q53ZE3</accession>
<accession>Q96BH2</accession>
<accession>Q9BRN3</accession>
<accession>Q9BWI1</accession>
<accession>Q9Y405</accession>
<evidence type="ECO:0000255" key="1"/>
<evidence type="ECO:0000256" key="2">
    <source>
        <dbReference type="SAM" id="MobiDB-lite"/>
    </source>
</evidence>
<evidence type="ECO:0000269" key="3">
    <source>
    </source>
</evidence>
<evidence type="ECO:0000269" key="4">
    <source>
    </source>
</evidence>
<evidence type="ECO:0000269" key="5">
    <source>
    </source>
</evidence>
<evidence type="ECO:0000269" key="6">
    <source>
    </source>
</evidence>
<evidence type="ECO:0000269" key="7">
    <source>
    </source>
</evidence>
<evidence type="ECO:0000269" key="8">
    <source>
    </source>
</evidence>
<evidence type="ECO:0000269" key="9">
    <source>
    </source>
</evidence>
<evidence type="ECO:0000269" key="10">
    <source>
    </source>
</evidence>
<evidence type="ECO:0000269" key="11">
    <source>
    </source>
</evidence>
<evidence type="ECO:0000269" key="12">
    <source>
    </source>
</evidence>
<evidence type="ECO:0000269" key="13">
    <source>
    </source>
</evidence>
<evidence type="ECO:0000303" key="14">
    <source>
    </source>
</evidence>
<evidence type="ECO:0000303" key="15">
    <source>
    </source>
</evidence>
<evidence type="ECO:0000303" key="16">
    <source>
    </source>
</evidence>
<evidence type="ECO:0000303" key="17">
    <source>
    </source>
</evidence>
<evidence type="ECO:0000303" key="18">
    <source>
    </source>
</evidence>
<evidence type="ECO:0000303" key="19">
    <source>
    </source>
</evidence>
<evidence type="ECO:0000303" key="20">
    <source>
    </source>
</evidence>
<evidence type="ECO:0000303" key="21">
    <source>
    </source>
</evidence>
<evidence type="ECO:0000303" key="22">
    <source>
    </source>
</evidence>
<evidence type="ECO:0000305" key="23"/>
<evidence type="ECO:0000312" key="24">
    <source>
        <dbReference type="HGNC" id="HGNC:20415"/>
    </source>
</evidence>
<evidence type="ECO:0007744" key="25">
    <source>
    </source>
</evidence>
<evidence type="ECO:0007829" key="26">
    <source>
        <dbReference type="PDB" id="1Y4J"/>
    </source>
</evidence>
<dbReference type="EMBL" id="AY323911">
    <property type="protein sequence ID" value="AAP86218.1"/>
    <property type="molecule type" value="mRNA"/>
</dbReference>
<dbReference type="EMBL" id="AY359103">
    <property type="protein sequence ID" value="AAQ89461.1"/>
    <property type="molecule type" value="mRNA"/>
</dbReference>
<dbReference type="EMBL" id="AK300488">
    <property type="protein sequence ID" value="BAG62203.1"/>
    <property type="molecule type" value="mRNA"/>
</dbReference>
<dbReference type="EMBL" id="AK301627">
    <property type="protein sequence ID" value="BAG63112.1"/>
    <property type="molecule type" value="mRNA"/>
</dbReference>
<dbReference type="EMBL" id="AK075477">
    <property type="protein sequence ID" value="BAC11643.1"/>
    <property type="molecule type" value="mRNA"/>
</dbReference>
<dbReference type="EMBL" id="AL050037">
    <property type="protein sequence ID" value="CAB43247.1"/>
    <property type="status" value="ALT_SEQ"/>
    <property type="molecule type" value="mRNA"/>
</dbReference>
<dbReference type="EMBL" id="CH471140">
    <property type="protein sequence ID" value="EAX07980.1"/>
    <property type="molecule type" value="Genomic_DNA"/>
</dbReference>
<dbReference type="EMBL" id="BC000224">
    <property type="protein sequence ID" value="AAH00224.1"/>
    <property type="status" value="ALT_INIT"/>
    <property type="molecule type" value="mRNA"/>
</dbReference>
<dbReference type="EMBL" id="BC006159">
    <property type="protein sequence ID" value="AAH06159.1"/>
    <property type="molecule type" value="mRNA"/>
</dbReference>
<dbReference type="EMBL" id="BC015600">
    <property type="protein sequence ID" value="AAH15600.2"/>
    <property type="molecule type" value="mRNA"/>
</dbReference>
<dbReference type="EMBL" id="BC084539">
    <property type="protein sequence ID" value="AAH84539.1"/>
    <property type="molecule type" value="mRNA"/>
</dbReference>
<dbReference type="EMBL" id="BC111092">
    <property type="protein sequence ID" value="AAI11093.1"/>
    <property type="molecule type" value="mRNA"/>
</dbReference>
<dbReference type="CCDS" id="CCDS43589.3">
    <molecule id="Q8NBJ7-5"/>
</dbReference>
<dbReference type="CCDS" id="CCDS47589.2">
    <molecule id="Q8NBJ7-3"/>
</dbReference>
<dbReference type="CCDS" id="CCDS55111.1">
    <molecule id="Q8NBJ7-2"/>
</dbReference>
<dbReference type="CCDS" id="CCDS5524.3">
    <molecule id="Q8NBJ7-1"/>
</dbReference>
<dbReference type="PIR" id="T08715">
    <property type="entry name" value="T08715"/>
</dbReference>
<dbReference type="RefSeq" id="NP_001035934.2">
    <property type="nucleotide sequence ID" value="NM_001042469.1"/>
</dbReference>
<dbReference type="RefSeq" id="NP_001035935.3">
    <molecule id="Q8NBJ7-5"/>
    <property type="nucleotide sequence ID" value="NM_001042470.3"/>
</dbReference>
<dbReference type="RefSeq" id="NP_001123541.2">
    <molecule id="Q8NBJ7-3"/>
    <property type="nucleotide sequence ID" value="NM_001130069.4"/>
</dbReference>
<dbReference type="RefSeq" id="NP_001139805.1">
    <molecule id="Q8NBJ7-2"/>
    <property type="nucleotide sequence ID" value="NM_001146333.3"/>
</dbReference>
<dbReference type="RefSeq" id="NP_056226.3">
    <molecule id="Q8NBJ7-1"/>
    <property type="nucleotide sequence ID" value="NM_015411.4"/>
</dbReference>
<dbReference type="PDB" id="1Y4J">
    <property type="method" value="X-ray"/>
    <property type="resolution" value="1.86 A"/>
    <property type="chains" value="A/B=27-301"/>
</dbReference>
<dbReference type="PDBsum" id="1Y4J"/>
<dbReference type="SMR" id="Q8NBJ7"/>
<dbReference type="BioGRID" id="117386">
    <property type="interactions" value="68"/>
</dbReference>
<dbReference type="FunCoup" id="Q8NBJ7">
    <property type="interactions" value="581"/>
</dbReference>
<dbReference type="IntAct" id="Q8NBJ7">
    <property type="interactions" value="28"/>
</dbReference>
<dbReference type="MINT" id="Q8NBJ7"/>
<dbReference type="STRING" id="9606.ENSP00000498402"/>
<dbReference type="GlyConnect" id="1773">
    <property type="glycosylation" value="4 N-Linked glycans (1 site)"/>
</dbReference>
<dbReference type="GlyCosmos" id="Q8NBJ7">
    <property type="glycosylation" value="2 sites, 5 glycans"/>
</dbReference>
<dbReference type="GlyGen" id="Q8NBJ7">
    <property type="glycosylation" value="6 sites, 18 N-linked glycans (1 site), 2 O-linked glycans (2 sites)"/>
</dbReference>
<dbReference type="iPTMnet" id="Q8NBJ7"/>
<dbReference type="MetOSite" id="Q8NBJ7"/>
<dbReference type="PhosphoSitePlus" id="Q8NBJ7"/>
<dbReference type="BioMuta" id="SUMF2"/>
<dbReference type="DMDM" id="296452916"/>
<dbReference type="REPRODUCTION-2DPAGE" id="IPI00171412"/>
<dbReference type="jPOST" id="Q8NBJ7"/>
<dbReference type="MassIVE" id="Q8NBJ7"/>
<dbReference type="PaxDb" id="9606-ENSP00000341938"/>
<dbReference type="PeptideAtlas" id="Q8NBJ7"/>
<dbReference type="ProteomicsDB" id="72779">
    <molecule id="Q8NBJ7-1"/>
</dbReference>
<dbReference type="ProteomicsDB" id="72780">
    <molecule id="Q8NBJ7-2"/>
</dbReference>
<dbReference type="ProteomicsDB" id="72781">
    <molecule id="Q8NBJ7-3"/>
</dbReference>
<dbReference type="ProteomicsDB" id="72782">
    <molecule id="Q8NBJ7-4"/>
</dbReference>
<dbReference type="ProteomicsDB" id="72783">
    <molecule id="Q8NBJ7-5"/>
</dbReference>
<dbReference type="Pumba" id="Q8NBJ7"/>
<dbReference type="Antibodypedia" id="13904">
    <property type="antibodies" value="87 antibodies from 22 providers"/>
</dbReference>
<dbReference type="DNASU" id="25870"/>
<dbReference type="Ensembl" id="ENST00000275607.13">
    <molecule id="Q8NBJ7-2"/>
    <property type="protein sequence ID" value="ENSP00000275607.9"/>
    <property type="gene ID" value="ENSG00000129103.19"/>
</dbReference>
<dbReference type="Ensembl" id="ENST00000342190.11">
    <molecule id="Q8NBJ7-3"/>
    <property type="protein sequence ID" value="ENSP00000341938.7"/>
    <property type="gene ID" value="ENSG00000129103.19"/>
</dbReference>
<dbReference type="Ensembl" id="ENST00000395435.7">
    <molecule id="Q8NBJ7-5"/>
    <property type="protein sequence ID" value="ENSP00000378823.3"/>
    <property type="gene ID" value="ENSG00000129103.19"/>
</dbReference>
<dbReference type="Ensembl" id="ENST00000434526.8">
    <molecule id="Q8NBJ7-1"/>
    <property type="protein sequence ID" value="ENSP00000400922.3"/>
    <property type="gene ID" value="ENSG00000129103.19"/>
</dbReference>
<dbReference type="GeneID" id="25870"/>
<dbReference type="KEGG" id="hsa:25870"/>
<dbReference type="MANE-Select" id="ENST00000434526.8">
    <property type="protein sequence ID" value="ENSP00000400922.3"/>
    <property type="RefSeq nucleotide sequence ID" value="NM_015411.4"/>
    <property type="RefSeq protein sequence ID" value="NP_056226.3"/>
</dbReference>
<dbReference type="UCSC" id="uc003trt.4">
    <molecule id="Q8NBJ7-1"/>
    <property type="organism name" value="human"/>
</dbReference>
<dbReference type="AGR" id="HGNC:20415"/>
<dbReference type="CTD" id="25870"/>
<dbReference type="DisGeNET" id="25870"/>
<dbReference type="GeneCards" id="SUMF2"/>
<dbReference type="HGNC" id="HGNC:20415">
    <property type="gene designation" value="SUMF2"/>
</dbReference>
<dbReference type="HPA" id="ENSG00000129103">
    <property type="expression patterns" value="Low tissue specificity"/>
</dbReference>
<dbReference type="MalaCards" id="SUMF2"/>
<dbReference type="MIM" id="607940">
    <property type="type" value="gene"/>
</dbReference>
<dbReference type="neXtProt" id="NX_Q8NBJ7"/>
<dbReference type="OpenTargets" id="ENSG00000129103"/>
<dbReference type="PharmGKB" id="PA134921869"/>
<dbReference type="VEuPathDB" id="HostDB:ENSG00000129103"/>
<dbReference type="eggNOG" id="ENOG502QRY6">
    <property type="taxonomic scope" value="Eukaryota"/>
</dbReference>
<dbReference type="GeneTree" id="ENSGT00940000162897"/>
<dbReference type="HOGENOM" id="CLU_012431_4_2_1"/>
<dbReference type="InParanoid" id="Q8NBJ7"/>
<dbReference type="OMA" id="CVRYRAS"/>
<dbReference type="OrthoDB" id="659at2759"/>
<dbReference type="PAN-GO" id="Q8NBJ7">
    <property type="GO annotations" value="1 GO annotation based on evolutionary models"/>
</dbReference>
<dbReference type="PhylomeDB" id="Q8NBJ7"/>
<dbReference type="PathwayCommons" id="Q8NBJ7"/>
<dbReference type="Reactome" id="R-HSA-1663150">
    <property type="pathway name" value="The activation of arylsulfatases"/>
</dbReference>
<dbReference type="Reactome" id="R-HSA-9840310">
    <property type="pathway name" value="Glycosphingolipid catabolism"/>
</dbReference>
<dbReference type="SignaLink" id="Q8NBJ7"/>
<dbReference type="BioGRID-ORCS" id="25870">
    <property type="hits" value="7 hits in 1156 CRISPR screens"/>
</dbReference>
<dbReference type="ChiTaRS" id="SUMF2">
    <property type="organism name" value="human"/>
</dbReference>
<dbReference type="EvolutionaryTrace" id="Q8NBJ7"/>
<dbReference type="GeneWiki" id="SUMF2"/>
<dbReference type="GenomeRNAi" id="25870"/>
<dbReference type="Pharos" id="Q8NBJ7">
    <property type="development level" value="Tbio"/>
</dbReference>
<dbReference type="PRO" id="PR:Q8NBJ7"/>
<dbReference type="Proteomes" id="UP000005640">
    <property type="component" value="Chromosome 7"/>
</dbReference>
<dbReference type="RNAct" id="Q8NBJ7">
    <property type="molecule type" value="protein"/>
</dbReference>
<dbReference type="Bgee" id="ENSG00000129103">
    <property type="expression patterns" value="Expressed in right uterine tube and 177 other cell types or tissues"/>
</dbReference>
<dbReference type="ExpressionAtlas" id="Q8NBJ7">
    <property type="expression patterns" value="baseline and differential"/>
</dbReference>
<dbReference type="GO" id="GO:0005783">
    <property type="term" value="C:endoplasmic reticulum"/>
    <property type="evidence" value="ECO:0000314"/>
    <property type="project" value="UniProtKB"/>
</dbReference>
<dbReference type="GO" id="GO:0005788">
    <property type="term" value="C:endoplasmic reticulum lumen"/>
    <property type="evidence" value="ECO:0000304"/>
    <property type="project" value="Reactome"/>
</dbReference>
<dbReference type="GO" id="GO:0042802">
    <property type="term" value="F:identical protein binding"/>
    <property type="evidence" value="ECO:0000353"/>
    <property type="project" value="IntAct"/>
</dbReference>
<dbReference type="GO" id="GO:0046872">
    <property type="term" value="F:metal ion binding"/>
    <property type="evidence" value="ECO:0007669"/>
    <property type="project" value="UniProtKB-KW"/>
</dbReference>
<dbReference type="FunFam" id="3.90.1580.10:FF:000002">
    <property type="entry name" value="sulfatase-modifying factor 2 isoform X1"/>
    <property type="match status" value="1"/>
</dbReference>
<dbReference type="Gene3D" id="3.90.1580.10">
    <property type="entry name" value="paralog of FGE (formylglycine-generating enzyme)"/>
    <property type="match status" value="1"/>
</dbReference>
<dbReference type="InterPro" id="IPR016187">
    <property type="entry name" value="CTDL_fold"/>
</dbReference>
<dbReference type="InterPro" id="IPR051043">
    <property type="entry name" value="Sulfatase_Mod_Factor_Kinase"/>
</dbReference>
<dbReference type="InterPro" id="IPR005532">
    <property type="entry name" value="SUMF_dom"/>
</dbReference>
<dbReference type="InterPro" id="IPR042095">
    <property type="entry name" value="SUMF_sf"/>
</dbReference>
<dbReference type="PANTHER" id="PTHR23150:SF33">
    <property type="entry name" value="INACTIVE C-ALPHA-FORMYLGLYCINE-GENERATING ENZYME 2"/>
    <property type="match status" value="1"/>
</dbReference>
<dbReference type="PANTHER" id="PTHR23150">
    <property type="entry name" value="SULFATASE MODIFYING FACTOR 1, 2"/>
    <property type="match status" value="1"/>
</dbReference>
<dbReference type="Pfam" id="PF03781">
    <property type="entry name" value="FGE-sulfatase"/>
    <property type="match status" value="1"/>
</dbReference>
<dbReference type="SUPFAM" id="SSF56436">
    <property type="entry name" value="C-type lectin-like"/>
    <property type="match status" value="1"/>
</dbReference>
<feature type="signal peptide" evidence="1">
    <location>
        <begin position="1"/>
        <end position="25"/>
    </location>
</feature>
<feature type="chain" id="PRO_0000033459" description="Inactive C-alpha-formylglycine-generating enzyme 2">
    <location>
        <begin position="26"/>
        <end position="301"/>
    </location>
</feature>
<feature type="region of interest" description="Disordered" evidence="2">
    <location>
        <begin position="274"/>
        <end position="301"/>
    </location>
</feature>
<feature type="short sequence motif" description="Non-canonical ER retention motif" evidence="12">
    <location>
        <begin position="298"/>
        <end position="301"/>
    </location>
</feature>
<feature type="compositionally biased region" description="Polar residues" evidence="2">
    <location>
        <begin position="274"/>
        <end position="284"/>
    </location>
</feature>
<feature type="binding site" evidence="7">
    <location>
        <position position="194"/>
    </location>
    <ligand>
        <name>Ca(2+)</name>
        <dbReference type="ChEBI" id="CHEBI:29108"/>
        <label>1</label>
    </ligand>
</feature>
<feature type="binding site" evidence="7">
    <location>
        <position position="195"/>
    </location>
    <ligand>
        <name>Ca(2+)</name>
        <dbReference type="ChEBI" id="CHEBI:29108"/>
        <label>1</label>
    </ligand>
</feature>
<feature type="binding site" evidence="7">
    <location>
        <position position="208"/>
    </location>
    <ligand>
        <name>Ca(2+)</name>
        <dbReference type="ChEBI" id="CHEBI:29108"/>
        <label>1</label>
    </ligand>
</feature>
<feature type="binding site" evidence="7">
    <location>
        <position position="210"/>
    </location>
    <ligand>
        <name>Ca(2+)</name>
        <dbReference type="ChEBI" id="CHEBI:29108"/>
        <label>1</label>
    </ligand>
</feature>
<feature type="binding site" evidence="7">
    <location>
        <position position="229"/>
    </location>
    <ligand>
        <name>Ca(2+)</name>
        <dbReference type="ChEBI" id="CHEBI:29108"/>
        <label>2</label>
    </ligand>
</feature>
<feature type="binding site" evidence="7">
    <location>
        <position position="232"/>
    </location>
    <ligand>
        <name>Ca(2+)</name>
        <dbReference type="ChEBI" id="CHEBI:29108"/>
        <label>2</label>
    </ligand>
</feature>
<feature type="binding site" evidence="7">
    <location>
        <position position="234"/>
    </location>
    <ligand>
        <name>Ca(2+)</name>
        <dbReference type="ChEBI" id="CHEBI:29108"/>
        <label>2</label>
    </ligand>
</feature>
<feature type="binding site" evidence="7">
    <location>
        <position position="236"/>
    </location>
    <ligand>
        <name>Ca(2+)</name>
        <dbReference type="ChEBI" id="CHEBI:29108"/>
        <label>2</label>
    </ligand>
</feature>
<feature type="glycosylation site" description="N-linked (GlcNAc...) asparagine" evidence="7">
    <location>
        <position position="191"/>
    </location>
</feature>
<feature type="disulfide bond" evidence="7 8">
    <location>
        <begin position="156"/>
        <end position="290"/>
    </location>
</feature>
<feature type="splice variant" id="VSP_007878" description="In isoform 2." evidence="15 16">
    <location>
        <begin position="1"/>
        <end position="88"/>
    </location>
</feature>
<feature type="splice variant" id="VSP_007880" description="In isoform 4." evidence="21">
    <original>SVLWWLPVEKAFWRQPAGPGSGIRERLEHPVLHVSWNDARAYCAWRGKRLPTEEEWEFAARGGLKGQVYPWGNWFQPNRTNLWQGKFPKGDKAEDGFHGVSPVNAFPAQNNYGLYDLLGNVWEWTASPYQAAEQDMRVLRGASWIDTADGSANHRARVTTRMGNTPDSASDNLGFRCAADAGRPPGEL</original>
    <variation>VKFTHGGTGSSQTAPTCGRESSPRETKLRMASMESPQMLSPPRTTTGSMTSWGTCGSGQHHRTRLLSRTCASSGGHPGSTQLMALPITGPGSPPGWATLQIQPQTTSVSAVLQTQAGRQGSCKQPGGDKEKSLLGSLSFPGHVANSAIPSSRASASGKNFPFPVSHPSVAGASHQGRRGLSLLCFGEGAQCVLTMAGGQVFLLEAKYY</variation>
    <location>
        <begin position="114"/>
        <end position="301"/>
    </location>
</feature>
<feature type="splice variant" id="VSP_040878" description="In isoform 5." evidence="23">
    <location>
        <begin position="114"/>
        <end position="197"/>
    </location>
</feature>
<feature type="splice variant" id="VSP_007879" description="In isoform 3." evidence="16">
    <original>LYDLLGNVWEWTASPYQAAEQDMRVLRGASWIDTADGSANHRARVTTRMGNTPDSASDNLGFRCAADAGRPPGEL</original>
    <variation>WATLQIQPQTTSVSAVLQTQAGRQGSCKQPGGDKEKSLLGSLSFPGHVANSAIPSSRASASGKNFPFPVSHPSVAGASHQGRRGLSLLCFGEGAQCVLTMAGGQVFLLEAKYY</variation>
    <location>
        <begin position="227"/>
        <end position="301"/>
    </location>
</feature>
<feature type="sequence variant" id="VAR_046951" description="In dbSNP:rs4245575." evidence="3 4 5 6 10 11 25">
    <original>D</original>
    <variation>E</variation>
    <location>
        <position position="51"/>
    </location>
</feature>
<feature type="sequence variant" id="VAR_080774" description="Found in a consanguineous family with intellectual disability; uncertain significance; dbSNP:rs778487055." evidence="13">
    <original>Y</original>
    <variation>C</variation>
    <location>
        <position position="228"/>
    </location>
</feature>
<feature type="mutagenesis site" description="Abolishes interaction with and inhibition of SUMF1. Can still form homodimers." evidence="9">
    <original>C</original>
    <variation>A</variation>
    <location>
        <position position="156"/>
    </location>
</feature>
<feature type="mutagenesis site" description="Abolishes interaction with and inhibition of SUMF1. Can still form homodimers." evidence="9">
    <original>C</original>
    <variation>A</variation>
    <location>
        <position position="290"/>
    </location>
</feature>
<feature type="mutagenesis site" description="Abolishes endoplasmic reticulum retention." evidence="12">
    <location>
        <begin position="298"/>
        <end position="301"/>
    </location>
</feature>
<feature type="mutagenesis site" description="Does not affect endoplasmic reticulum retention." evidence="12">
    <original>PG</original>
    <variation>KD</variation>
    <location>
        <begin position="298"/>
        <end position="299"/>
    </location>
</feature>
<feature type="mutagenesis site" description="Does not affect endoplasmic reticulum retention." evidence="12">
    <original>P</original>
    <variation>S</variation>
    <location>
        <position position="298"/>
    </location>
</feature>
<feature type="strand" evidence="26">
    <location>
        <begin position="30"/>
        <end position="33"/>
    </location>
</feature>
<feature type="strand" evidence="26">
    <location>
        <begin position="36"/>
        <end position="41"/>
    </location>
</feature>
<feature type="strand" evidence="26">
    <location>
        <begin position="55"/>
        <end position="59"/>
    </location>
</feature>
<feature type="strand" evidence="26">
    <location>
        <begin position="61"/>
        <end position="67"/>
    </location>
</feature>
<feature type="helix" evidence="26">
    <location>
        <begin position="71"/>
        <end position="81"/>
    </location>
</feature>
<feature type="helix" evidence="26">
    <location>
        <begin position="86"/>
        <end position="90"/>
    </location>
</feature>
<feature type="strand" evidence="26">
    <location>
        <begin position="92"/>
        <end position="96"/>
    </location>
</feature>
<feature type="helix" evidence="26">
    <location>
        <begin position="97"/>
        <end position="99"/>
    </location>
</feature>
<feature type="helix" evidence="26">
    <location>
        <begin position="102"/>
        <end position="106"/>
    </location>
</feature>
<feature type="strand" evidence="26">
    <location>
        <begin position="118"/>
        <end position="122"/>
    </location>
</feature>
<feature type="helix" evidence="26">
    <location>
        <begin position="149"/>
        <end position="158"/>
    </location>
</feature>
<feature type="helix" evidence="26">
    <location>
        <begin position="166"/>
        <end position="174"/>
    </location>
</feature>
<feature type="strand" evidence="26">
    <location>
        <begin position="185"/>
        <end position="187"/>
    </location>
</feature>
<feature type="turn" evidence="26">
    <location>
        <begin position="200"/>
        <end position="202"/>
    </location>
</feature>
<feature type="strand" evidence="26">
    <location>
        <begin position="231"/>
        <end position="241"/>
    </location>
</feature>
<feature type="helix" evidence="26">
    <location>
        <begin position="245"/>
        <end position="247"/>
    </location>
</feature>
<feature type="strand" evidence="26">
    <location>
        <begin position="250"/>
        <end position="254"/>
    </location>
</feature>
<feature type="strand" evidence="26">
    <location>
        <begin position="263"/>
        <end position="268"/>
    </location>
</feature>
<feature type="strand" evidence="26">
    <location>
        <begin position="274"/>
        <end position="277"/>
    </location>
</feature>
<feature type="strand" evidence="26">
    <location>
        <begin position="291"/>
        <end position="293"/>
    </location>
</feature>
<protein>
    <recommendedName>
        <fullName evidence="23">Inactive C-alpha-formylglycine-generating enzyme 2</fullName>
    </recommendedName>
    <alternativeName>
        <fullName evidence="17 18 22">Paralog of formylglycine-generating enzyme</fullName>
        <shortName evidence="17 18 22">pFGE</shortName>
    </alternativeName>
    <alternativeName>
        <fullName evidence="19">Sulfatase-modifying factor 2</fullName>
    </alternativeName>
</protein>
<comment type="function">
    <text evidence="3 8 9">Lacks formylglycine generating activity and is unable to convert newly synthesized inactive sulfatases to their active form. Inhibits the activation of sulfatases by SUMF1.</text>
</comment>
<comment type="subunit">
    <text evidence="7 9">Homodimer and heterodimer with SUMF1.</text>
</comment>
<comment type="interaction">
    <interactant intactId="EBI-723091">
        <id>Q8NBJ7</id>
    </interactant>
    <interactant intactId="EBI-21535880">
        <id>Q92870-2</id>
        <label>APBB2</label>
    </interactant>
    <organismsDiffer>false</organismsDiffer>
    <experiments>3</experiments>
</comment>
<comment type="interaction">
    <interactant intactId="EBI-723091">
        <id>Q8NBJ7</id>
    </interactant>
    <interactant intactId="EBI-2115097">
        <id>P07339</id>
        <label>CTSD</label>
    </interactant>
    <organismsDiffer>false</organismsDiffer>
    <experiments>3</experiments>
</comment>
<comment type="interaction">
    <interactant intactId="EBI-723091">
        <id>Q8NBJ7</id>
    </interactant>
    <interactant intactId="EBI-747754">
        <id>P28799</id>
        <label>GRN</label>
    </interactant>
    <organismsDiffer>false</organismsDiffer>
    <experiments>3</experiments>
</comment>
<comment type="interaction">
    <interactant intactId="EBI-723091">
        <id>Q8NBJ7</id>
    </interactant>
    <interactant intactId="EBI-352682">
        <id>P04792</id>
        <label>HSPB1</label>
    </interactant>
    <organismsDiffer>false</organismsDiffer>
    <experiments>3</experiments>
</comment>
<comment type="interaction">
    <interactant intactId="EBI-723091">
        <id>Q8NBJ7</id>
    </interactant>
    <interactant intactId="EBI-466029">
        <id>P42858</id>
        <label>HTT</label>
    </interactant>
    <organismsDiffer>false</organismsDiffer>
    <experiments>6</experiments>
</comment>
<comment type="interaction">
    <interactant intactId="EBI-723091">
        <id>Q8NBJ7</id>
    </interactant>
    <interactant intactId="EBI-2687288">
        <id>P22304</id>
        <label>IDS</label>
    </interactant>
    <organismsDiffer>false</organismsDiffer>
    <experiments>2</experiments>
</comment>
<comment type="interaction">
    <interactant intactId="EBI-723091">
        <id>Q8NBJ7</id>
    </interactant>
    <interactant intactId="EBI-10975473">
        <id>O60333-2</id>
        <label>KIF1B</label>
    </interactant>
    <organismsDiffer>false</organismsDiffer>
    <experiments>3</experiments>
</comment>
<comment type="interaction">
    <interactant intactId="EBI-723091">
        <id>Q8NBJ7</id>
    </interactant>
    <interactant intactId="EBI-50433196">
        <id>A0A6Q8PF08</id>
        <label>PMP22</label>
    </interactant>
    <organismsDiffer>false</organismsDiffer>
    <experiments>3</experiments>
</comment>
<comment type="interaction">
    <interactant intactId="EBI-723091">
        <id>Q8NBJ7</id>
    </interactant>
    <interactant intactId="EBI-2853497">
        <id>Q8NBK3</id>
        <label>SUMF1</label>
    </interactant>
    <organismsDiffer>false</organismsDiffer>
    <experiments>9</experiments>
</comment>
<comment type="interaction">
    <interactant intactId="EBI-723091">
        <id>Q8NBJ7</id>
    </interactant>
    <interactant intactId="EBI-723091">
        <id>Q8NBJ7</id>
        <label>SUMF2</label>
    </interactant>
    <organismsDiffer>false</organismsDiffer>
    <experiments>2</experiments>
</comment>
<comment type="interaction">
    <interactant intactId="EBI-723091">
        <id>Q8NBJ7</id>
    </interactant>
    <interactant intactId="EBI-711909">
        <id>P02766</id>
        <label>TTR</label>
    </interactant>
    <organismsDiffer>false</organismsDiffer>
    <experiments>3</experiments>
</comment>
<comment type="interaction">
    <interactant intactId="EBI-723091">
        <id>Q8NBJ7</id>
    </interactant>
    <interactant intactId="EBI-720609">
        <id>O76024</id>
        <label>WFS1</label>
    </interactant>
    <organismsDiffer>false</organismsDiffer>
    <experiments>3</experiments>
</comment>
<comment type="interaction">
    <interactant intactId="EBI-723091">
        <id>Q8NBJ7</id>
    </interactant>
    <interactant intactId="EBI-25475894">
        <id>P0DTC3</id>
        <label>3a</label>
    </interactant>
    <organismsDiffer>true</organismsDiffer>
    <experiments>3</experiments>
</comment>
<comment type="subcellular location">
    <subcellularLocation>
        <location evidence="8 9 12">Endoplasmic reticulum lumen</location>
    </subcellularLocation>
</comment>
<comment type="alternative products">
    <event type="alternative splicing"/>
    <isoform>
        <id>Q8NBJ7-1</id>
        <name>1</name>
        <sequence type="displayed"/>
    </isoform>
    <isoform>
        <id>Q8NBJ7-2</id>
        <name>2</name>
        <sequence type="described" ref="VSP_007878"/>
    </isoform>
    <isoform>
        <id>Q8NBJ7-3</id>
        <name>3</name>
        <sequence type="described" ref="VSP_007879"/>
    </isoform>
    <isoform>
        <id>Q8NBJ7-5</id>
        <name>5</name>
        <sequence type="described" ref="VSP_040878"/>
    </isoform>
    <isoform>
        <id>Q8NBJ7-4</id>
        <name>4</name>
        <sequence type="described" ref="VSP_007880"/>
    </isoform>
</comment>
<comment type="tissue specificity">
    <text evidence="8 9">Detected in heart, brain, placenta, lung, liver, skeletal muscle, kidney and pancreas. Highest levels in kidney, liver and placenta.</text>
</comment>
<comment type="domain">
    <text evidence="12">The non-canonical ER retention motif mediates retention of the protein in the endoplasmic reticulum.</text>
</comment>
<comment type="similarity">
    <text evidence="23">Belongs to the sulfatase-modifying factor family.</text>
</comment>
<comment type="caution">
    <text evidence="23">Although strongly similar to formylglycine-generating enzyme, lacks the catalytic Cys residues at positions 261 and 266 that bind the catalytic copper. The catalytic copper is required to activate oxygen and catalyze oxidative C-H activation.</text>
</comment>
<comment type="sequence caution" evidence="23">
    <conflict type="erroneous initiation">
        <sequence resource="EMBL-CDS" id="AAH00224"/>
    </conflict>
    <text>Extended N-terminus.</text>
</comment>
<comment type="sequence caution" evidence="23">
    <conflict type="erroneous initiation">
        <sequence resource="EMBL-CDS" id="CAB43247"/>
    </conflict>
    <text>Extended N-terminus.</text>
</comment>
<comment type="sequence caution" evidence="23">
    <conflict type="frameshift">
        <sequence resource="EMBL-CDS" id="CAB43247"/>
    </conflict>
</comment>
<organism>
    <name type="scientific">Homo sapiens</name>
    <name type="common">Human</name>
    <dbReference type="NCBI Taxonomy" id="9606"/>
    <lineage>
        <taxon>Eukaryota</taxon>
        <taxon>Metazoa</taxon>
        <taxon>Chordata</taxon>
        <taxon>Craniata</taxon>
        <taxon>Vertebrata</taxon>
        <taxon>Euteleostomi</taxon>
        <taxon>Mammalia</taxon>
        <taxon>Eutheria</taxon>
        <taxon>Euarchontoglires</taxon>
        <taxon>Primates</taxon>
        <taxon>Haplorrhini</taxon>
        <taxon>Catarrhini</taxon>
        <taxon>Hominidae</taxon>
        <taxon>Homo</taxon>
    </lineage>
</organism>
<gene>
    <name evidence="19 24" type="primary">SUMF2</name>
    <name evidence="20" type="ORF">PSEC0171</name>
    <name evidence="14" type="ORF">UNQ1968/PRO4500</name>
</gene>
<name>SUMF2_HUMAN</name>
<keyword id="KW-0002">3D-structure</keyword>
<keyword id="KW-0025">Alternative splicing</keyword>
<keyword id="KW-0106">Calcium</keyword>
<keyword id="KW-0903">Direct protein sequencing</keyword>
<keyword id="KW-1015">Disulfide bond</keyword>
<keyword id="KW-0256">Endoplasmic reticulum</keyword>
<keyword id="KW-0325">Glycoprotein</keyword>
<keyword id="KW-0479">Metal-binding</keyword>
<keyword id="KW-1267">Proteomics identification</keyword>
<keyword id="KW-1185">Reference proteome</keyword>
<keyword id="KW-0732">Signal</keyword>
<proteinExistence type="evidence at protein level"/>
<sequence>MARHGLPLLPLLSLLVGAWLKLGNGQATSMVQLQGGRFLMGTNSPDSRDGDGPVREATVKPFAIDIFPVTNKDFRDFVREKKYRTEAEMFGWSFVFEDFVSDELRNKATQPMKSVLWWLPVEKAFWRQPAGPGSGIRERLEHPVLHVSWNDARAYCAWRGKRLPTEEEWEFAARGGLKGQVYPWGNWFQPNRTNLWQGKFPKGDKAEDGFHGVSPVNAFPAQNNYGLYDLLGNVWEWTASPYQAAEQDMRVLRGASWIDTADGSANHRARVTTRMGNTPDSASDNLGFRCAADAGRPPGEL</sequence>
<reference key="1">
    <citation type="journal article" date="2003" name="Cell">
        <title>The multiple sulfatase deficiency gene encodes an essential and limiting factor for the activity of sulfatases.</title>
        <authorList>
            <person name="Cosma M.P."/>
            <person name="Pepe S."/>
            <person name="Annunziata I."/>
            <person name="Newbold R.F."/>
            <person name="Grompe M."/>
            <person name="Parenti G."/>
            <person name="Ballabio A."/>
        </authorList>
    </citation>
    <scope>NUCLEOTIDE SEQUENCE [MRNA] (ISOFORM 1)</scope>
    <scope>FUNCTION</scope>
    <scope>VARIANT GLU-51</scope>
</reference>
<reference key="2">
    <citation type="journal article" date="2003" name="Genome Res.">
        <title>The secreted protein discovery initiative (SPDI), a large-scale effort to identify novel human secreted and transmembrane proteins: a bioinformatics assessment.</title>
        <authorList>
            <person name="Clark H.F."/>
            <person name="Gurney A.L."/>
            <person name="Abaya E."/>
            <person name="Baker K."/>
            <person name="Baldwin D.T."/>
            <person name="Brush J."/>
            <person name="Chen J."/>
            <person name="Chow B."/>
            <person name="Chui C."/>
            <person name="Crowley C."/>
            <person name="Currell B."/>
            <person name="Deuel B."/>
            <person name="Dowd P."/>
            <person name="Eaton D."/>
            <person name="Foster J.S."/>
            <person name="Grimaldi C."/>
            <person name="Gu Q."/>
            <person name="Hass P.E."/>
            <person name="Heldens S."/>
            <person name="Huang A."/>
            <person name="Kim H.S."/>
            <person name="Klimowski L."/>
            <person name="Jin Y."/>
            <person name="Johnson S."/>
            <person name="Lee J."/>
            <person name="Lewis L."/>
            <person name="Liao D."/>
            <person name="Mark M.R."/>
            <person name="Robbie E."/>
            <person name="Sanchez C."/>
            <person name="Schoenfeld J."/>
            <person name="Seshagiri S."/>
            <person name="Simmons L."/>
            <person name="Singh J."/>
            <person name="Smith V."/>
            <person name="Stinson J."/>
            <person name="Vagts A."/>
            <person name="Vandlen R.L."/>
            <person name="Watanabe C."/>
            <person name="Wieand D."/>
            <person name="Woods K."/>
            <person name="Xie M.-H."/>
            <person name="Yansura D.G."/>
            <person name="Yi S."/>
            <person name="Yu G."/>
            <person name="Yuan J."/>
            <person name="Zhang M."/>
            <person name="Zhang Z."/>
            <person name="Goddard A.D."/>
            <person name="Wood W.I."/>
            <person name="Godowski P.J."/>
            <person name="Gray A.M."/>
        </authorList>
    </citation>
    <scope>NUCLEOTIDE SEQUENCE [LARGE SCALE MRNA] (ISOFORM 1)</scope>
    <scope>VARIANT GLU-51</scope>
</reference>
<reference key="3">
    <citation type="journal article" date="2004" name="Nat. Genet.">
        <title>Complete sequencing and characterization of 21,243 full-length human cDNAs.</title>
        <authorList>
            <person name="Ota T."/>
            <person name="Suzuki Y."/>
            <person name="Nishikawa T."/>
            <person name="Otsuki T."/>
            <person name="Sugiyama T."/>
            <person name="Irie R."/>
            <person name="Wakamatsu A."/>
            <person name="Hayashi K."/>
            <person name="Sato H."/>
            <person name="Nagai K."/>
            <person name="Kimura K."/>
            <person name="Makita H."/>
            <person name="Sekine M."/>
            <person name="Obayashi M."/>
            <person name="Nishi T."/>
            <person name="Shibahara T."/>
            <person name="Tanaka T."/>
            <person name="Ishii S."/>
            <person name="Yamamoto J."/>
            <person name="Saito K."/>
            <person name="Kawai Y."/>
            <person name="Isono Y."/>
            <person name="Nakamura Y."/>
            <person name="Nagahari K."/>
            <person name="Murakami K."/>
            <person name="Yasuda T."/>
            <person name="Iwayanagi T."/>
            <person name="Wagatsuma M."/>
            <person name="Shiratori A."/>
            <person name="Sudo H."/>
            <person name="Hosoiri T."/>
            <person name="Kaku Y."/>
            <person name="Kodaira H."/>
            <person name="Kondo H."/>
            <person name="Sugawara M."/>
            <person name="Takahashi M."/>
            <person name="Kanda K."/>
            <person name="Yokoi T."/>
            <person name="Furuya T."/>
            <person name="Kikkawa E."/>
            <person name="Omura Y."/>
            <person name="Abe K."/>
            <person name="Kamihara K."/>
            <person name="Katsuta N."/>
            <person name="Sato K."/>
            <person name="Tanikawa M."/>
            <person name="Yamazaki M."/>
            <person name="Ninomiya K."/>
            <person name="Ishibashi T."/>
            <person name="Yamashita H."/>
            <person name="Murakawa K."/>
            <person name="Fujimori K."/>
            <person name="Tanai H."/>
            <person name="Kimata M."/>
            <person name="Watanabe M."/>
            <person name="Hiraoka S."/>
            <person name="Chiba Y."/>
            <person name="Ishida S."/>
            <person name="Ono Y."/>
            <person name="Takiguchi S."/>
            <person name="Watanabe S."/>
            <person name="Yosida M."/>
            <person name="Hotuta T."/>
            <person name="Kusano J."/>
            <person name="Kanehori K."/>
            <person name="Takahashi-Fujii A."/>
            <person name="Hara H."/>
            <person name="Tanase T.-O."/>
            <person name="Nomura Y."/>
            <person name="Togiya S."/>
            <person name="Komai F."/>
            <person name="Hara R."/>
            <person name="Takeuchi K."/>
            <person name="Arita M."/>
            <person name="Imose N."/>
            <person name="Musashino K."/>
            <person name="Yuuki H."/>
            <person name="Oshima A."/>
            <person name="Sasaki N."/>
            <person name="Aotsuka S."/>
            <person name="Yoshikawa Y."/>
            <person name="Matsunawa H."/>
            <person name="Ichihara T."/>
            <person name="Shiohata N."/>
            <person name="Sano S."/>
            <person name="Moriya S."/>
            <person name="Momiyama H."/>
            <person name="Satoh N."/>
            <person name="Takami S."/>
            <person name="Terashima Y."/>
            <person name="Suzuki O."/>
            <person name="Nakagawa S."/>
            <person name="Senoh A."/>
            <person name="Mizoguchi H."/>
            <person name="Goto Y."/>
            <person name="Shimizu F."/>
            <person name="Wakebe H."/>
            <person name="Hishigaki H."/>
            <person name="Watanabe T."/>
            <person name="Sugiyama A."/>
            <person name="Takemoto M."/>
            <person name="Kawakami B."/>
            <person name="Yamazaki M."/>
            <person name="Watanabe K."/>
            <person name="Kumagai A."/>
            <person name="Itakura S."/>
            <person name="Fukuzumi Y."/>
            <person name="Fujimori Y."/>
            <person name="Komiyama M."/>
            <person name="Tashiro H."/>
            <person name="Tanigami A."/>
            <person name="Fujiwara T."/>
            <person name="Ono T."/>
            <person name="Yamada K."/>
            <person name="Fujii Y."/>
            <person name="Ozaki K."/>
            <person name="Hirao M."/>
            <person name="Ohmori Y."/>
            <person name="Kawabata A."/>
            <person name="Hikiji T."/>
            <person name="Kobatake N."/>
            <person name="Inagaki H."/>
            <person name="Ikema Y."/>
            <person name="Okamoto S."/>
            <person name="Okitani R."/>
            <person name="Kawakami T."/>
            <person name="Noguchi S."/>
            <person name="Itoh T."/>
            <person name="Shigeta K."/>
            <person name="Senba T."/>
            <person name="Matsumura K."/>
            <person name="Nakajima Y."/>
            <person name="Mizuno T."/>
            <person name="Morinaga M."/>
            <person name="Sasaki M."/>
            <person name="Togashi T."/>
            <person name="Oyama M."/>
            <person name="Hata H."/>
            <person name="Watanabe M."/>
            <person name="Komatsu T."/>
            <person name="Mizushima-Sugano J."/>
            <person name="Satoh T."/>
            <person name="Shirai Y."/>
            <person name="Takahashi Y."/>
            <person name="Nakagawa K."/>
            <person name="Okumura K."/>
            <person name="Nagase T."/>
            <person name="Nomura N."/>
            <person name="Kikuchi H."/>
            <person name="Masuho Y."/>
            <person name="Yamashita R."/>
            <person name="Nakai K."/>
            <person name="Yada T."/>
            <person name="Nakamura Y."/>
            <person name="Ohara O."/>
            <person name="Isogai T."/>
            <person name="Sugano S."/>
        </authorList>
    </citation>
    <scope>NUCLEOTIDE SEQUENCE [LARGE SCALE MRNA] (ISOFORM 2)</scope>
    <scope>VARIANT GLU-51</scope>
    <source>
        <tissue>Colon</tissue>
        <tissue>Prostate</tissue>
    </source>
</reference>
<reference key="4">
    <citation type="journal article" date="2005" name="DNA Res.">
        <title>Signal sequence and keyword trap in silico for selection of full-length human cDNAs encoding secretion or membrane proteins from oligo-capped cDNA libraries.</title>
        <authorList>
            <person name="Otsuki T."/>
            <person name="Ota T."/>
            <person name="Nishikawa T."/>
            <person name="Hayashi K."/>
            <person name="Suzuki Y."/>
            <person name="Yamamoto J."/>
            <person name="Wakamatsu A."/>
            <person name="Kimura K."/>
            <person name="Sakamoto K."/>
            <person name="Hatano N."/>
            <person name="Kawai Y."/>
            <person name="Ishii S."/>
            <person name="Saito K."/>
            <person name="Kojima S."/>
            <person name="Sugiyama T."/>
            <person name="Ono T."/>
            <person name="Okano K."/>
            <person name="Yoshikawa Y."/>
            <person name="Aotsuka S."/>
            <person name="Sasaki N."/>
            <person name="Hattori A."/>
            <person name="Okumura K."/>
            <person name="Nagai K."/>
            <person name="Sugano S."/>
            <person name="Isogai T."/>
        </authorList>
    </citation>
    <scope>NUCLEOTIDE SEQUENCE [LARGE SCALE MRNA] (ISOFORM 1)</scope>
    <scope>VARIANT GLU-51</scope>
    <source>
        <tissue>Placenta</tissue>
    </source>
</reference>
<reference key="5">
    <citation type="journal article" date="2007" name="BMC Genomics">
        <title>The full-ORF clone resource of the German cDNA consortium.</title>
        <authorList>
            <person name="Bechtel S."/>
            <person name="Rosenfelder H."/>
            <person name="Duda A."/>
            <person name="Schmidt C.P."/>
            <person name="Ernst U."/>
            <person name="Wellenreuther R."/>
            <person name="Mehrle A."/>
            <person name="Schuster C."/>
            <person name="Bahr A."/>
            <person name="Bloecker H."/>
            <person name="Heubner D."/>
            <person name="Hoerlein A."/>
            <person name="Michel G."/>
            <person name="Wedler H."/>
            <person name="Koehrer K."/>
            <person name="Ottenwaelder B."/>
            <person name="Poustka A."/>
            <person name="Wiemann S."/>
            <person name="Schupp I."/>
        </authorList>
    </citation>
    <scope>NUCLEOTIDE SEQUENCE [LARGE SCALE MRNA] (ISOFORM 4)</scope>
    <scope>VARIANT GLU-51</scope>
    <source>
        <tissue>Fetal kidney</tissue>
    </source>
</reference>
<reference key="6">
    <citation type="journal article" date="2003" name="Nature">
        <title>The DNA sequence of human chromosome 7.</title>
        <authorList>
            <person name="Hillier L.W."/>
            <person name="Fulton R.S."/>
            <person name="Fulton L.A."/>
            <person name="Graves T.A."/>
            <person name="Pepin K.H."/>
            <person name="Wagner-McPherson C."/>
            <person name="Layman D."/>
            <person name="Maas J."/>
            <person name="Jaeger S."/>
            <person name="Walker R."/>
            <person name="Wylie K."/>
            <person name="Sekhon M."/>
            <person name="Becker M.C."/>
            <person name="O'Laughlin M.D."/>
            <person name="Schaller M.E."/>
            <person name="Fewell G.A."/>
            <person name="Delehaunty K.D."/>
            <person name="Miner T.L."/>
            <person name="Nash W.E."/>
            <person name="Cordes M."/>
            <person name="Du H."/>
            <person name="Sun H."/>
            <person name="Edwards J."/>
            <person name="Bradshaw-Cordum H."/>
            <person name="Ali J."/>
            <person name="Andrews S."/>
            <person name="Isak A."/>
            <person name="Vanbrunt A."/>
            <person name="Nguyen C."/>
            <person name="Du F."/>
            <person name="Lamar B."/>
            <person name="Courtney L."/>
            <person name="Kalicki J."/>
            <person name="Ozersky P."/>
            <person name="Bielicki L."/>
            <person name="Scott K."/>
            <person name="Holmes A."/>
            <person name="Harkins R."/>
            <person name="Harris A."/>
            <person name="Strong C.M."/>
            <person name="Hou S."/>
            <person name="Tomlinson C."/>
            <person name="Dauphin-Kohlberg S."/>
            <person name="Kozlowicz-Reilly A."/>
            <person name="Leonard S."/>
            <person name="Rohlfing T."/>
            <person name="Rock S.M."/>
            <person name="Tin-Wollam A.-M."/>
            <person name="Abbott A."/>
            <person name="Minx P."/>
            <person name="Maupin R."/>
            <person name="Strowmatt C."/>
            <person name="Latreille P."/>
            <person name="Miller N."/>
            <person name="Johnson D."/>
            <person name="Murray J."/>
            <person name="Woessner J.P."/>
            <person name="Wendl M.C."/>
            <person name="Yang S.-P."/>
            <person name="Schultz B.R."/>
            <person name="Wallis J.W."/>
            <person name="Spieth J."/>
            <person name="Bieri T.A."/>
            <person name="Nelson J.O."/>
            <person name="Berkowicz N."/>
            <person name="Wohldmann P.E."/>
            <person name="Cook L.L."/>
            <person name="Hickenbotham M.T."/>
            <person name="Eldred J."/>
            <person name="Williams D."/>
            <person name="Bedell J.A."/>
            <person name="Mardis E.R."/>
            <person name="Clifton S.W."/>
            <person name="Chissoe S.L."/>
            <person name="Marra M.A."/>
            <person name="Raymond C."/>
            <person name="Haugen E."/>
            <person name="Gillett W."/>
            <person name="Zhou Y."/>
            <person name="James R."/>
            <person name="Phelps K."/>
            <person name="Iadanoto S."/>
            <person name="Bubb K."/>
            <person name="Simms E."/>
            <person name="Levy R."/>
            <person name="Clendenning J."/>
            <person name="Kaul R."/>
            <person name="Kent W.J."/>
            <person name="Furey T.S."/>
            <person name="Baertsch R.A."/>
            <person name="Brent M.R."/>
            <person name="Keibler E."/>
            <person name="Flicek P."/>
            <person name="Bork P."/>
            <person name="Suyama M."/>
            <person name="Bailey J.A."/>
            <person name="Portnoy M.E."/>
            <person name="Torrents D."/>
            <person name="Chinwalla A.T."/>
            <person name="Gish W.R."/>
            <person name="Eddy S.R."/>
            <person name="McPherson J.D."/>
            <person name="Olson M.V."/>
            <person name="Eichler E.E."/>
            <person name="Green E.D."/>
            <person name="Waterston R.H."/>
            <person name="Wilson R.K."/>
        </authorList>
    </citation>
    <scope>NUCLEOTIDE SEQUENCE [LARGE SCALE GENOMIC DNA]</scope>
</reference>
<reference key="7">
    <citation type="submission" date="2005-07" db="EMBL/GenBank/DDBJ databases">
        <authorList>
            <person name="Mural R.J."/>
            <person name="Istrail S."/>
            <person name="Sutton G.G."/>
            <person name="Florea L."/>
            <person name="Halpern A.L."/>
            <person name="Mobarry C.M."/>
            <person name="Lippert R."/>
            <person name="Walenz B."/>
            <person name="Shatkay H."/>
            <person name="Dew I."/>
            <person name="Miller J.R."/>
            <person name="Flanigan M.J."/>
            <person name="Edwards N.J."/>
            <person name="Bolanos R."/>
            <person name="Fasulo D."/>
            <person name="Halldorsson B.V."/>
            <person name="Hannenhalli S."/>
            <person name="Turner R."/>
            <person name="Yooseph S."/>
            <person name="Lu F."/>
            <person name="Nusskern D.R."/>
            <person name="Shue B.C."/>
            <person name="Zheng X.H."/>
            <person name="Zhong F."/>
            <person name="Delcher A.L."/>
            <person name="Huson D.H."/>
            <person name="Kravitz S.A."/>
            <person name="Mouchard L."/>
            <person name="Reinert K."/>
            <person name="Remington K.A."/>
            <person name="Clark A.G."/>
            <person name="Waterman M.S."/>
            <person name="Eichler E.E."/>
            <person name="Adams M.D."/>
            <person name="Hunkapiller M.W."/>
            <person name="Myers E.W."/>
            <person name="Venter J.C."/>
        </authorList>
    </citation>
    <scope>NUCLEOTIDE SEQUENCE [LARGE SCALE GENOMIC DNA]</scope>
</reference>
<reference key="8">
    <citation type="journal article" date="2004" name="Genome Res.">
        <title>The status, quality, and expansion of the NIH full-length cDNA project: the Mammalian Gene Collection (MGC).</title>
        <authorList>
            <consortium name="The MGC Project Team"/>
        </authorList>
    </citation>
    <scope>NUCLEOTIDE SEQUENCE [LARGE SCALE MRNA] (ISOFORMS 1; 2 AND 3)</scope>
    <scope>VARIANT GLU-51</scope>
    <source>
        <tissue>Eye</tissue>
        <tissue>Ovary</tissue>
        <tissue>Placenta</tissue>
    </source>
</reference>
<reference key="9">
    <citation type="journal article" date="2005" name="J. Biol. Chem.">
        <title>Expression, localization, structural, and functional characterization of pFGE, the paralog of the Calpha-formylglycine-generating enzyme.</title>
        <authorList>
            <person name="Mariappan M."/>
            <person name="Preusser-Kunze A."/>
            <person name="Balleininger M."/>
            <person name="Eiselt N."/>
            <person name="Schmidt B."/>
            <person name="Gande S.L."/>
            <person name="Wenzel D."/>
            <person name="Dierks T."/>
            <person name="von Figura K."/>
        </authorList>
    </citation>
    <scope>PARTIAL PROTEIN SEQUENCE</scope>
    <scope>IDENTIFICATION BY MASS SPECTROMETRY</scope>
    <scope>FUNCTION</scope>
    <scope>SUBCELLULAR LOCATION</scope>
    <scope>DISULFIDE BOND</scope>
    <scope>GLYCOSYLATION</scope>
    <scope>TISSUE SPECIFICITY</scope>
</reference>
<reference key="10">
    <citation type="journal article" date="2005" name="EMBO Rep.">
        <title>Sulphatase activities are regulated by the interaction of sulphatase-modifying factor 1 with SUMF2.</title>
        <authorList>
            <person name="Zito E."/>
            <person name="Fraldi A."/>
            <person name="Pepe S."/>
            <person name="Annunziata I."/>
            <person name="Kobinger G."/>
            <person name="Di Natale P."/>
            <person name="Ballabio A."/>
            <person name="Cosma M.P."/>
        </authorList>
    </citation>
    <scope>FUNCTION</scope>
    <scope>SUBUNIT</scope>
    <scope>SUBCELLULAR LOCATION</scope>
    <scope>TISSUE SPECIFICITY</scope>
    <scope>MUTAGENESIS OF CYS-156 AND CYS-290</scope>
</reference>
<reference key="11">
    <citation type="journal article" date="2008" name="FEBS J.">
        <title>Paralog of the formylglycine-generating enzyme--retention in the endoplasmic reticulum by canonical and noncanonical signals.</title>
        <authorList>
            <person name="Gande S.L."/>
            <person name="Mariappan M."/>
            <person name="Schmidt B."/>
            <person name="Pringle T.H."/>
            <person name="von Figura K."/>
            <person name="Dierks T."/>
        </authorList>
    </citation>
    <scope>SUBCELLULAR LOCATION</scope>
    <scope>NON-CANONICAL ER RETENTION MOTIF</scope>
    <scope>MUTAGENESIS OF PRO-298; 298-PRO-GLY-299 AND 298-PRO--LEU-301</scope>
</reference>
<reference key="12">
    <citation type="journal article" date="2011" name="BMC Syst. Biol.">
        <title>Initial characterization of the human central proteome.</title>
        <authorList>
            <person name="Burkard T.R."/>
            <person name="Planyavsky M."/>
            <person name="Kaupe I."/>
            <person name="Breitwieser F.P."/>
            <person name="Buerckstuemmer T."/>
            <person name="Bennett K.L."/>
            <person name="Superti-Furga G."/>
            <person name="Colinge J."/>
        </authorList>
    </citation>
    <scope>IDENTIFICATION BY MASS SPECTROMETRY [LARGE SCALE ANALYSIS]</scope>
</reference>
<reference key="13">
    <citation type="journal article" date="2015" name="Proteomics">
        <title>N-terminome analysis of the human mitochondrial proteome.</title>
        <authorList>
            <person name="Vaca Jacome A.S."/>
            <person name="Rabilloud T."/>
            <person name="Schaeffer-Reiss C."/>
            <person name="Rompais M."/>
            <person name="Ayoub D."/>
            <person name="Lane L."/>
            <person name="Bairoch A."/>
            <person name="Van Dorsselaer A."/>
            <person name="Carapito C."/>
        </authorList>
    </citation>
    <scope>IDENTIFICATION BY MASS SPECTROMETRY [LARGE SCALE ANALYSIS]</scope>
</reference>
<reference key="14">
    <citation type="journal article" date="2005" name="J. Biol. Chem.">
        <title>Crystal structure of human pFGE, the paralog of the Calpha-formylglycine-generating enzyme.</title>
        <authorList>
            <person name="Dickmanns A."/>
            <person name="Schmidt B."/>
            <person name="Rudolph M.G."/>
            <person name="Mariappan M."/>
            <person name="Dierks T."/>
            <person name="von Figura K."/>
            <person name="Ficner R."/>
        </authorList>
    </citation>
    <scope>X-RAY CRYSTALLOGRAPHY (1.86 ANGSTROMS) OF 27-301 IN COMPLEX WITH CALCIUM IONS</scope>
    <scope>GLYCOSYLATION AT ASN-191</scope>
    <scope>DISULFIDE BONDS</scope>
</reference>
<reference key="15">
    <citation type="journal article" date="2014" name="J. Proteomics">
        <title>An enzyme assisted RP-RPLC approach for in-depth analysis of human liver phosphoproteome.</title>
        <authorList>
            <person name="Bian Y."/>
            <person name="Song C."/>
            <person name="Cheng K."/>
            <person name="Dong M."/>
            <person name="Wang F."/>
            <person name="Huang J."/>
            <person name="Sun D."/>
            <person name="Wang L."/>
            <person name="Ye M."/>
            <person name="Zou H."/>
        </authorList>
    </citation>
    <scope>VARIANT [LARGE SCALE ANALYSIS] GLU-51</scope>
    <scope>IDENTIFICATION BY MASS SPECTROMETRY [LARGE SCALE ANALYSIS]</scope>
    <source>
        <tissue>Liver</tissue>
    </source>
</reference>
<reference key="16">
    <citation type="journal article" date="2018" name="Mol. Psychiatry">
        <title>Mapping autosomal recessive intellectual disability: combined microarray and exome sequencing identifies 26 novel candidate genes in 192 consanguineous families.</title>
        <authorList>
            <person name="Harripaul R."/>
            <person name="Vasli N."/>
            <person name="Mikhailov A."/>
            <person name="Rafiq M.A."/>
            <person name="Mittal K."/>
            <person name="Windpassinger C."/>
            <person name="Sheikh T.I."/>
            <person name="Noor A."/>
            <person name="Mahmood H."/>
            <person name="Downey S."/>
            <person name="Johnson M."/>
            <person name="Vleuten K."/>
            <person name="Bell L."/>
            <person name="Ilyas M."/>
            <person name="Khan F.S."/>
            <person name="Khan V."/>
            <person name="Moradi M."/>
            <person name="Ayaz M."/>
            <person name="Naeem F."/>
            <person name="Heidari A."/>
            <person name="Ahmed I."/>
            <person name="Ghadami S."/>
            <person name="Agha Z."/>
            <person name="Zeinali S."/>
            <person name="Qamar R."/>
            <person name="Mozhdehipanah H."/>
            <person name="John P."/>
            <person name="Mir A."/>
            <person name="Ansar M."/>
            <person name="French L."/>
            <person name="Ayub M."/>
            <person name="Vincent J.B."/>
        </authorList>
    </citation>
    <scope>VARIANT CYS-228</scope>
</reference>